<protein>
    <recommendedName>
        <fullName>NADH-ubiquinone oxidoreductase chain 4</fullName>
        <ecNumber>7.1.1.2</ecNumber>
    </recommendedName>
    <alternativeName>
        <fullName>NADH dehydrogenase subunit 4</fullName>
    </alternativeName>
</protein>
<feature type="chain" id="PRO_0000355053" description="NADH-ubiquinone oxidoreductase chain 4">
    <location>
        <begin position="1"/>
        <end position="467"/>
    </location>
</feature>
<feature type="transmembrane region" description="Helical" evidence="2">
    <location>
        <begin position="21"/>
        <end position="40"/>
    </location>
</feature>
<feature type="transmembrane region" description="Helical" evidence="2">
    <location>
        <begin position="54"/>
        <end position="74"/>
    </location>
</feature>
<feature type="transmembrane region" description="Helical" evidence="2">
    <location>
        <begin position="79"/>
        <end position="99"/>
    </location>
</feature>
<feature type="transmembrane region" description="Helical" evidence="2">
    <location>
        <begin position="105"/>
        <end position="125"/>
    </location>
</feature>
<feature type="transmembrane region" description="Helical" evidence="2">
    <location>
        <begin position="135"/>
        <end position="155"/>
    </location>
</feature>
<feature type="transmembrane region" description="Helical" evidence="2">
    <location>
        <begin position="168"/>
        <end position="188"/>
    </location>
</feature>
<feature type="transmembrane region" description="Helical" evidence="2">
    <location>
        <begin position="207"/>
        <end position="227"/>
    </location>
</feature>
<feature type="transmembrane region" description="Helical" evidence="2">
    <location>
        <begin position="239"/>
        <end position="259"/>
    </location>
</feature>
<feature type="transmembrane region" description="Helical" evidence="2">
    <location>
        <begin position="266"/>
        <end position="286"/>
    </location>
</feature>
<feature type="transmembrane region" description="Helical" evidence="2">
    <location>
        <begin position="297"/>
        <end position="317"/>
    </location>
</feature>
<feature type="transmembrane region" description="Helical" evidence="2">
    <location>
        <begin position="330"/>
        <end position="350"/>
    </location>
</feature>
<feature type="transmembrane region" description="Helical" evidence="2">
    <location>
        <begin position="367"/>
        <end position="387"/>
    </location>
</feature>
<feature type="transmembrane region" description="Helical" evidence="2">
    <location>
        <begin position="420"/>
        <end position="440"/>
    </location>
</feature>
<gene>
    <name type="primary">ND4</name>
</gene>
<keyword id="KW-0249">Electron transport</keyword>
<keyword id="KW-0472">Membrane</keyword>
<keyword id="KW-0496">Mitochondrion</keyword>
<keyword id="KW-0520">NAD</keyword>
<keyword id="KW-1185">Reference proteome</keyword>
<keyword id="KW-0679">Respiratory chain</keyword>
<keyword id="KW-1278">Translocase</keyword>
<keyword id="KW-0812">Transmembrane</keyword>
<keyword id="KW-1133">Transmembrane helix</keyword>
<keyword id="KW-0813">Transport</keyword>
<keyword id="KW-0830">Ubiquinone</keyword>
<name>NU4M_DEBHA</name>
<accession>A9RAH8</accession>
<proteinExistence type="inferred from homology"/>
<reference key="1">
    <citation type="journal article" date="2008" name="FEMS Yeast Res.">
        <title>Promiscuous DNA in the nuclear genomes of hemiascomycetous yeasts.</title>
        <authorList>
            <person name="Sacerdot C."/>
            <person name="Casaregola S."/>
            <person name="Lafontaine I."/>
            <person name="Tekaia F."/>
            <person name="Dujon B."/>
            <person name="Ozier-Kalogeropoulos O."/>
        </authorList>
    </citation>
    <scope>NUCLEOTIDE SEQUENCE [LARGE SCALE GENOMIC DNA]</scope>
    <source>
        <strain>ATCC 36239 / CBS 767 / BCRC 21394 / JCM 1990 / NBRC 0083 / IGC 2968</strain>
    </source>
</reference>
<sequence length="467" mass="52759">MTMLFVIFSGLTSMTSRLVNSMSKHMFTVASMLMAMPTLYDWEEIDVYYTSDGMADVLMLLTMYMLPLSMISNWNNMKSTLYFELVLNLGMMLLINFMCQDMTSFYMYFEASLAPLFMLMGLYGAANRDKAADYVLMYTLFSSLFMLLAMALYEVMLDNTDYQATSLLVLSLDLQCMLFLAMSMGIAVKTPLAPLHTWLPVVHSESPLAGSMLLAGMILKLAVFAMIRLILPTLSDASVTYTPFVYVMCVMTMMYTSIITLRQTDLKVIIAYSSISHMAVCMLGMLSNTMTGITGSLVLCIAHGFVSPGLFMMVGGMLYDRYHNRLMYYFQGLISYMPYLSVYFMMLSFCNMGTPLSINFIGEMLSLTGAINRAPVLGAMAALSVLLSACYQMKLTNRLTGGIKTPYMSLTSDCTYRETVLMITLIVPTMFLGFFPSWVMDFLWDAPNLLYMFMVYRTFIKMSIPWL</sequence>
<comment type="function">
    <text evidence="1">Core subunit of the mitochondrial membrane respiratory chain NADH dehydrogenase (Complex I) that is believed to belong to the minimal assembly required for catalysis. Complex I functions in the transfer of electrons from NADH to the respiratory chain. The immediate electron acceptor for the enzyme is believed to be ubiquinone (By similarity).</text>
</comment>
<comment type="catalytic activity">
    <reaction>
        <text>a ubiquinone + NADH + 5 H(+)(in) = a ubiquinol + NAD(+) + 4 H(+)(out)</text>
        <dbReference type="Rhea" id="RHEA:29091"/>
        <dbReference type="Rhea" id="RHEA-COMP:9565"/>
        <dbReference type="Rhea" id="RHEA-COMP:9566"/>
        <dbReference type="ChEBI" id="CHEBI:15378"/>
        <dbReference type="ChEBI" id="CHEBI:16389"/>
        <dbReference type="ChEBI" id="CHEBI:17976"/>
        <dbReference type="ChEBI" id="CHEBI:57540"/>
        <dbReference type="ChEBI" id="CHEBI:57945"/>
        <dbReference type="EC" id="7.1.1.2"/>
    </reaction>
</comment>
<comment type="subcellular location">
    <subcellularLocation>
        <location evidence="1">Mitochondrion membrane</location>
        <topology evidence="1">Multi-pass membrane protein</topology>
    </subcellularLocation>
</comment>
<comment type="similarity">
    <text evidence="3">Belongs to the complex I subunit 4 family.</text>
</comment>
<organism>
    <name type="scientific">Debaryomyces hansenii (strain ATCC 36239 / CBS 767 / BCRC 21394 / JCM 1990 / NBRC 0083 / IGC 2968)</name>
    <name type="common">Yeast</name>
    <name type="synonym">Torulaspora hansenii</name>
    <dbReference type="NCBI Taxonomy" id="284592"/>
    <lineage>
        <taxon>Eukaryota</taxon>
        <taxon>Fungi</taxon>
        <taxon>Dikarya</taxon>
        <taxon>Ascomycota</taxon>
        <taxon>Saccharomycotina</taxon>
        <taxon>Pichiomycetes</taxon>
        <taxon>Debaryomycetaceae</taxon>
        <taxon>Debaryomyces</taxon>
    </lineage>
</organism>
<evidence type="ECO:0000250" key="1"/>
<evidence type="ECO:0000255" key="2"/>
<evidence type="ECO:0000305" key="3"/>
<dbReference type="EC" id="7.1.1.2"/>
<dbReference type="EMBL" id="DQ508940">
    <property type="protein sequence ID" value="ABF58079.1"/>
    <property type="molecule type" value="Genomic_DNA"/>
</dbReference>
<dbReference type="RefSeq" id="YP_001621430.1">
    <property type="nucleotide sequence ID" value="NC_010166.1"/>
</dbReference>
<dbReference type="SMR" id="A9RAH8"/>
<dbReference type="STRING" id="284592.A9RAH8"/>
<dbReference type="GeneID" id="5845852"/>
<dbReference type="KEGG" id="dha:ND4"/>
<dbReference type="InParanoid" id="A9RAH8"/>
<dbReference type="Proteomes" id="UP000000599">
    <property type="component" value="Mitochondrion"/>
</dbReference>
<dbReference type="GO" id="GO:0031966">
    <property type="term" value="C:mitochondrial membrane"/>
    <property type="evidence" value="ECO:0007669"/>
    <property type="project" value="UniProtKB-SubCell"/>
</dbReference>
<dbReference type="GO" id="GO:0008137">
    <property type="term" value="F:NADH dehydrogenase (ubiquinone) activity"/>
    <property type="evidence" value="ECO:0007669"/>
    <property type="project" value="UniProtKB-EC"/>
</dbReference>
<dbReference type="GO" id="GO:0048039">
    <property type="term" value="F:ubiquinone binding"/>
    <property type="evidence" value="ECO:0007669"/>
    <property type="project" value="TreeGrafter"/>
</dbReference>
<dbReference type="GO" id="GO:0042773">
    <property type="term" value="P:ATP synthesis coupled electron transport"/>
    <property type="evidence" value="ECO:0007669"/>
    <property type="project" value="InterPro"/>
</dbReference>
<dbReference type="GO" id="GO:0015990">
    <property type="term" value="P:electron transport coupled proton transport"/>
    <property type="evidence" value="ECO:0007669"/>
    <property type="project" value="TreeGrafter"/>
</dbReference>
<dbReference type="InterPro" id="IPR010227">
    <property type="entry name" value="NADH_Q_OxRdtase_chainM/4"/>
</dbReference>
<dbReference type="InterPro" id="IPR003918">
    <property type="entry name" value="NADH_UbQ_OxRdtase"/>
</dbReference>
<dbReference type="InterPro" id="IPR001750">
    <property type="entry name" value="ND/Mrp_TM"/>
</dbReference>
<dbReference type="NCBIfam" id="TIGR01972">
    <property type="entry name" value="NDH_I_M"/>
    <property type="match status" value="1"/>
</dbReference>
<dbReference type="PANTHER" id="PTHR43507">
    <property type="entry name" value="NADH-UBIQUINONE OXIDOREDUCTASE CHAIN 4"/>
    <property type="match status" value="1"/>
</dbReference>
<dbReference type="PANTHER" id="PTHR43507:SF1">
    <property type="entry name" value="NADH-UBIQUINONE OXIDOREDUCTASE CHAIN 4"/>
    <property type="match status" value="1"/>
</dbReference>
<dbReference type="Pfam" id="PF00361">
    <property type="entry name" value="Proton_antipo_M"/>
    <property type="match status" value="1"/>
</dbReference>
<dbReference type="PRINTS" id="PR01437">
    <property type="entry name" value="NUOXDRDTASE4"/>
</dbReference>
<geneLocation type="mitochondrion"/>